<sequence length="593" mass="65584">MGTNNTSNNNGTTKKMSLEEFLGNDTLGESVWDEEDINLDAISNTTNIDILKQTKAGEHQRDGHQQHPHGGHGPMNRSRFSNAGPFGGGSMGDFANHHHPLQHQQGPPYIVKFSDLPPRFSNFDIEDLFQAKFTKFIKFKLFWEINKNPSISTLKSGSIFDQNFKRDSKVAFVELYTSRDMDKILNYWTTPLKEIYHITTAPAEFEDFKDYSTKVKLLTDPKDDAGKPFITKTQRSKSNPFGSAKPVDTQSKILDIEEKMENLHVEDTTTLRASLIPSSDSMATTATGSKITILKKQTPTEEESHSATPTPKPLSYSEVVERSVVNETSKKGTPLSKLDSPALELQSKPDKSDEFKGGDEQGFEKGGDDKAQLDVSNDKDKGSETDVDKQFTFKNVEREHSMSRTKYNGNHNNNNGNFRGSNRYRGGPNGSSYKGGHNNRGNRGGYRGGSSYNNNNNNTNDNNNNNNNSSSNNNNGSRYHDRQNNEEGLTSDSSLDASGNKKNDFTNSTSNTQQYSIFKPASGFLGQGNNDSIRNNGRGNYNSSGMNGGSRGRGFGRGRGFGRGAYNNRGSRGGRGSSGNYSNYNNRTTDMPL</sequence>
<organism>
    <name type="scientific">Saccharomyces cerevisiae (strain ATCC 204508 / S288c)</name>
    <name type="common">Baker's yeast</name>
    <dbReference type="NCBI Taxonomy" id="559292"/>
    <lineage>
        <taxon>Eukaryota</taxon>
        <taxon>Fungi</taxon>
        <taxon>Dikarya</taxon>
        <taxon>Ascomycota</taxon>
        <taxon>Saccharomycotina</taxon>
        <taxon>Saccharomycetes</taxon>
        <taxon>Saccharomycetales</taxon>
        <taxon>Saccharomycetaceae</taxon>
        <taxon>Saccharomyces</taxon>
    </lineage>
</organism>
<name>PSP2_YEAST</name>
<comment type="function">
    <text evidence="7 8">DNA polymerase alpha mutation suppressor. Suppressor of group II intron splicing defects of a mutation in MRS2. May play a role in mitochondrial mRNA splicing.</text>
</comment>
<comment type="subcellular location">
    <subcellularLocation>
        <location evidence="2 4">Cytoplasm</location>
    </subcellularLocation>
    <subcellularLocation>
        <location evidence="4">Cytoplasm</location>
        <location evidence="4">P-body</location>
    </subcellularLocation>
    <subcellularLocation>
        <location evidence="4">Cytoplasm</location>
        <location evidence="4">Stress granule</location>
    </subcellularLocation>
</comment>
<comment type="miscellaneous">
    <text evidence="3">Present with 2190 molecules/cell in log phase SD medium.</text>
</comment>
<comment type="sequence caution" evidence="11">
    <conflict type="erroneous gene model prediction">
        <sequence resource="EMBL-CDS" id="AAB50177"/>
    </conflict>
</comment>
<comment type="sequence caution" evidence="11">
    <conflict type="erroneous gene model prediction">
        <sequence resource="EMBL-CDS" id="AAC49960"/>
    </conflict>
</comment>
<comment type="sequence caution" evidence="11">
    <conflict type="erroneous gene model prediction">
        <sequence resource="EMBL-CDS" id="CAA89935"/>
    </conflict>
</comment>
<evidence type="ECO:0000256" key="1">
    <source>
        <dbReference type="SAM" id="MobiDB-lite"/>
    </source>
</evidence>
<evidence type="ECO:0000269" key="2">
    <source>
    </source>
</evidence>
<evidence type="ECO:0000269" key="3">
    <source>
    </source>
</evidence>
<evidence type="ECO:0000269" key="4">
    <source>
    </source>
</evidence>
<evidence type="ECO:0000269" key="5">
    <source>
    </source>
</evidence>
<evidence type="ECO:0000269" key="6">
    <source>
    </source>
</evidence>
<evidence type="ECO:0000269" key="7">
    <source>
    </source>
</evidence>
<evidence type="ECO:0000269" key="8">
    <source>
    </source>
</evidence>
<evidence type="ECO:0000303" key="9">
    <source>
    </source>
</evidence>
<evidence type="ECO:0000303" key="10">
    <source>
    </source>
</evidence>
<evidence type="ECO:0000305" key="11"/>
<evidence type="ECO:0007744" key="12">
    <source>
    </source>
</evidence>
<evidence type="ECO:0007744" key="13">
    <source>
    </source>
</evidence>
<evidence type="ECO:0007744" key="14">
    <source>
    </source>
</evidence>
<evidence type="ECO:0007744" key="15">
    <source>
    </source>
</evidence>
<keyword id="KW-0963">Cytoplasm</keyword>
<keyword id="KW-0488">Methylation</keyword>
<keyword id="KW-0597">Phosphoprotein</keyword>
<keyword id="KW-1185">Reference proteome</keyword>
<dbReference type="EMBL" id="U33116">
    <property type="protein sequence ID" value="AAC49960.1"/>
    <property type="status" value="ALT_SEQ"/>
    <property type="molecule type" value="Genomic_DNA"/>
</dbReference>
<dbReference type="EMBL" id="U29398">
    <property type="protein sequence ID" value="AAB50177.1"/>
    <property type="status" value="ALT_SEQ"/>
    <property type="molecule type" value="Genomic_DNA"/>
</dbReference>
<dbReference type="EMBL" id="Z49810">
    <property type="protein sequence ID" value="CAA89935.1"/>
    <property type="status" value="ALT_SEQ"/>
    <property type="molecule type" value="Genomic_DNA"/>
</dbReference>
<dbReference type="EMBL" id="AY245793">
    <property type="protein sequence ID" value="AAP04343.1"/>
    <property type="molecule type" value="mRNA"/>
</dbReference>
<dbReference type="EMBL" id="BK006946">
    <property type="protein sequence ID" value="DAA09881.1"/>
    <property type="molecule type" value="Genomic_DNA"/>
</dbReference>
<dbReference type="PIR" id="S55102">
    <property type="entry name" value="S55102"/>
</dbReference>
<dbReference type="RefSeq" id="NP_013695.2">
    <property type="nucleotide sequence ID" value="NM_001182375.1"/>
</dbReference>
<dbReference type="BioGRID" id="35152">
    <property type="interactions" value="339"/>
</dbReference>
<dbReference type="FunCoup" id="P50109">
    <property type="interactions" value="117"/>
</dbReference>
<dbReference type="IntAct" id="P50109">
    <property type="interactions" value="12"/>
</dbReference>
<dbReference type="MINT" id="P50109"/>
<dbReference type="STRING" id="4932.YML017W"/>
<dbReference type="GlyGen" id="P50109">
    <property type="glycosylation" value="1 site, 1 O-linked glycan (1 site)"/>
</dbReference>
<dbReference type="iPTMnet" id="P50109"/>
<dbReference type="PaxDb" id="4932-YML017W"/>
<dbReference type="PeptideAtlas" id="P50109"/>
<dbReference type="EnsemblFungi" id="YML017W_mRNA">
    <property type="protein sequence ID" value="YML017W"/>
    <property type="gene ID" value="YML017W"/>
</dbReference>
<dbReference type="GeneID" id="854991"/>
<dbReference type="KEGG" id="sce:YML017W"/>
<dbReference type="AGR" id="SGD:S000004479"/>
<dbReference type="SGD" id="S000004479">
    <property type="gene designation" value="PSP2"/>
</dbReference>
<dbReference type="VEuPathDB" id="FungiDB:YML017W"/>
<dbReference type="eggNOG" id="ENOG502QWA7">
    <property type="taxonomic scope" value="Eukaryota"/>
</dbReference>
<dbReference type="HOGENOM" id="CLU_032585_0_0_1"/>
<dbReference type="InParanoid" id="P50109"/>
<dbReference type="OMA" id="FKLFWEL"/>
<dbReference type="OrthoDB" id="48651at2759"/>
<dbReference type="BioCyc" id="YEAST:G3O-32621-MONOMER"/>
<dbReference type="BioGRID-ORCS" id="854991">
    <property type="hits" value="4 hits in 10 CRISPR screens"/>
</dbReference>
<dbReference type="CD-CODE" id="A777E0F8">
    <property type="entry name" value="P-body"/>
</dbReference>
<dbReference type="CD-CODE" id="E03F929F">
    <property type="entry name" value="Stress granule"/>
</dbReference>
<dbReference type="PRO" id="PR:P50109"/>
<dbReference type="Proteomes" id="UP000002311">
    <property type="component" value="Chromosome XIII"/>
</dbReference>
<dbReference type="RNAct" id="P50109">
    <property type="molecule type" value="protein"/>
</dbReference>
<dbReference type="GO" id="GO:0005737">
    <property type="term" value="C:cytoplasm"/>
    <property type="evidence" value="ECO:0007005"/>
    <property type="project" value="SGD"/>
</dbReference>
<dbReference type="GO" id="GO:0010494">
    <property type="term" value="C:cytoplasmic stress granule"/>
    <property type="evidence" value="ECO:0007669"/>
    <property type="project" value="UniProtKB-SubCell"/>
</dbReference>
<dbReference type="GO" id="GO:0000932">
    <property type="term" value="C:P-body"/>
    <property type="evidence" value="ECO:0000314"/>
    <property type="project" value="SGD"/>
</dbReference>
<dbReference type="GO" id="GO:0000172">
    <property type="term" value="C:ribonuclease MRP complex"/>
    <property type="evidence" value="ECO:0000318"/>
    <property type="project" value="GO_Central"/>
</dbReference>
<dbReference type="GO" id="GO:0003729">
    <property type="term" value="F:mRNA binding"/>
    <property type="evidence" value="ECO:0007005"/>
    <property type="project" value="SGD"/>
</dbReference>
<dbReference type="GO" id="GO:0003723">
    <property type="term" value="F:RNA binding"/>
    <property type="evidence" value="ECO:0000318"/>
    <property type="project" value="GO_Central"/>
</dbReference>
<dbReference type="GO" id="GO:0001682">
    <property type="term" value="P:tRNA 5'-leader removal"/>
    <property type="evidence" value="ECO:0000318"/>
    <property type="project" value="GO_Central"/>
</dbReference>
<protein>
    <recommendedName>
        <fullName evidence="11">Protein PSP2</fullName>
    </recommendedName>
    <alternativeName>
        <fullName evidence="9">Mitochondrial regulator of splicing 15</fullName>
    </alternativeName>
    <alternativeName>
        <fullName evidence="10">Polymerase suppressor protein 2</fullName>
    </alternativeName>
</protein>
<accession>P50109</accession>
<accession>D6VZF7</accession>
<accession>Q07170</accession>
<accession>Q870H3</accession>
<feature type="chain" id="PRO_0000097069" description="Protein PSP2">
    <location>
        <begin position="1"/>
        <end position="593"/>
    </location>
</feature>
<feature type="region of interest" description="Disordered" evidence="1">
    <location>
        <begin position="56"/>
        <end position="101"/>
    </location>
</feature>
<feature type="region of interest" description="Disordered" evidence="1">
    <location>
        <begin position="227"/>
        <end position="248"/>
    </location>
</feature>
<feature type="region of interest" description="Disordered" evidence="1">
    <location>
        <begin position="280"/>
        <end position="593"/>
    </location>
</feature>
<feature type="compositionally biased region" description="Basic and acidic residues" evidence="1">
    <location>
        <begin position="56"/>
        <end position="65"/>
    </location>
</feature>
<feature type="compositionally biased region" description="Polar residues" evidence="1">
    <location>
        <begin position="231"/>
        <end position="241"/>
    </location>
</feature>
<feature type="compositionally biased region" description="Polar residues" evidence="1">
    <location>
        <begin position="280"/>
        <end position="290"/>
    </location>
</feature>
<feature type="compositionally biased region" description="Basic and acidic residues" evidence="1">
    <location>
        <begin position="347"/>
        <end position="402"/>
    </location>
</feature>
<feature type="compositionally biased region" description="Low complexity" evidence="1">
    <location>
        <begin position="408"/>
        <end position="426"/>
    </location>
</feature>
<feature type="compositionally biased region" description="Low complexity" evidence="1">
    <location>
        <begin position="449"/>
        <end position="477"/>
    </location>
</feature>
<feature type="compositionally biased region" description="Polar residues" evidence="1">
    <location>
        <begin position="486"/>
        <end position="497"/>
    </location>
</feature>
<feature type="compositionally biased region" description="Polar residues" evidence="1">
    <location>
        <begin position="505"/>
        <end position="516"/>
    </location>
</feature>
<feature type="compositionally biased region" description="Low complexity" evidence="1">
    <location>
        <begin position="534"/>
        <end position="545"/>
    </location>
</feature>
<feature type="compositionally biased region" description="Gly residues" evidence="1">
    <location>
        <begin position="546"/>
        <end position="563"/>
    </location>
</feature>
<feature type="compositionally biased region" description="Low complexity" evidence="1">
    <location>
        <begin position="578"/>
        <end position="587"/>
    </location>
</feature>
<feature type="modified residue" description="Phosphoserine" evidence="6">
    <location>
        <position position="150"/>
    </location>
</feature>
<feature type="modified residue" description="Phosphoserine" evidence="6 12 13 15">
    <location>
        <position position="238"/>
    </location>
</feature>
<feature type="modified residue" description="Phosphoserine" evidence="6 13 14 15">
    <location>
        <position position="340"/>
    </location>
</feature>
<feature type="modified residue" description="Omega-N-methylarginine" evidence="5">
    <location>
        <position position="419"/>
    </location>
</feature>
<feature type="modified residue" description="Omega-N-methylarginine" evidence="5 6">
    <location>
        <position position="425"/>
    </location>
</feature>
<feature type="modified residue" description="Omega-N-methylarginine" evidence="6">
    <location>
        <position position="440"/>
    </location>
</feature>
<feature type="modified residue" description="Dimethylated arginine" evidence="6">
    <location>
        <position position="443"/>
    </location>
</feature>
<feature type="modified residue" description="Omega-N-methylarginine" evidence="6">
    <location>
        <position position="447"/>
    </location>
</feature>
<feature type="modified residue" description="Phosphoserine" evidence="6">
    <location>
        <position position="522"/>
    </location>
</feature>
<feature type="modified residue" description="Omega-N-methylarginine" evidence="5">
    <location>
        <position position="538"/>
    </location>
</feature>
<feature type="modified residue" description="Omega-N-methylarginine" evidence="5">
    <location>
        <position position="551"/>
    </location>
</feature>
<feature type="modified residue" description="Omega-N-methylarginine" evidence="5">
    <location>
        <position position="575"/>
    </location>
</feature>
<gene>
    <name evidence="10" type="primary">PSP2</name>
    <name evidence="9" type="synonym">MRS15</name>
    <name type="ordered locus">YML017W</name>
    <name type="ORF">YM9571.01</name>
</gene>
<proteinExistence type="evidence at protein level"/>
<reference key="1">
    <citation type="thesis" date="1995" institute="Vienna Biocentre" country="Austria">
        <title>Suppressors of pet- phenotype due to MRS2 disruption.</title>
        <authorList>
            <person name="Teply R."/>
        </authorList>
    </citation>
    <scope>NUCLEOTIDE SEQUENCE [GENOMIC DNA]</scope>
    <source>
        <strain>ATCC 44774 / DBY747</strain>
    </source>
</reference>
<reference key="2">
    <citation type="journal article" date="1998" name="Mol. Gen. Genet.">
        <title>Suppressors of the temperature sensitivity of DNA polymerase alpha mutations in Saccharomyces cerevisiae.</title>
        <authorList>
            <person name="Formosa T."/>
            <person name="Nittis T."/>
        </authorList>
    </citation>
    <scope>NUCLEOTIDE SEQUENCE [GENOMIC DNA]</scope>
    <scope>FUNCTION</scope>
</reference>
<reference key="3">
    <citation type="journal article" date="1997" name="Nature">
        <title>The nucleotide sequence of Saccharomyces cerevisiae chromosome XIII.</title>
        <authorList>
            <person name="Bowman S."/>
            <person name="Churcher C.M."/>
            <person name="Badcock K."/>
            <person name="Brown D."/>
            <person name="Chillingworth T."/>
            <person name="Connor R."/>
            <person name="Dedman K."/>
            <person name="Devlin K."/>
            <person name="Gentles S."/>
            <person name="Hamlin N."/>
            <person name="Hunt S."/>
            <person name="Jagels K."/>
            <person name="Lye G."/>
            <person name="Moule S."/>
            <person name="Odell C."/>
            <person name="Pearson D."/>
            <person name="Rajandream M.A."/>
            <person name="Rice P."/>
            <person name="Skelton J."/>
            <person name="Walsh S.V."/>
            <person name="Whitehead S."/>
            <person name="Barrell B.G."/>
        </authorList>
    </citation>
    <scope>NUCLEOTIDE SEQUENCE [LARGE SCALE GENOMIC DNA]</scope>
    <source>
        <strain>ATCC 204508 / S288c</strain>
    </source>
</reference>
<reference key="4">
    <citation type="journal article" date="2014" name="G3 (Bethesda)">
        <title>The reference genome sequence of Saccharomyces cerevisiae: Then and now.</title>
        <authorList>
            <person name="Engel S.R."/>
            <person name="Dietrich F.S."/>
            <person name="Fisk D.G."/>
            <person name="Binkley G."/>
            <person name="Balakrishnan R."/>
            <person name="Costanzo M.C."/>
            <person name="Dwight S.S."/>
            <person name="Hitz B.C."/>
            <person name="Karra K."/>
            <person name="Nash R.S."/>
            <person name="Weng S."/>
            <person name="Wong E.D."/>
            <person name="Lloyd P."/>
            <person name="Skrzypek M.S."/>
            <person name="Miyasato S.R."/>
            <person name="Simison M."/>
            <person name="Cherry J.M."/>
        </authorList>
    </citation>
    <scope>GENOME REANNOTATION</scope>
    <source>
        <strain>ATCC 204508 / S288c</strain>
    </source>
</reference>
<reference key="5">
    <citation type="journal article" date="2003" name="Genome Biol.">
        <title>Reinvestigation of the Saccharomyces cerevisiae genome annotation by comparison to the genome of a related fungus: Ashbya gossypii.</title>
        <authorList>
            <person name="Brachat S."/>
            <person name="Dietrich F.S."/>
            <person name="Voegeli S."/>
            <person name="Zhang Z."/>
            <person name="Stuart L."/>
            <person name="Lerch A."/>
            <person name="Gates K."/>
            <person name="Gaffney T.D."/>
            <person name="Philippsen P."/>
        </authorList>
    </citation>
    <scope>NUCLEOTIDE SEQUENCE [MRNA] OF 1-167</scope>
    <source>
        <strain>ATCC 204511 / S288c / AB972</strain>
    </source>
</reference>
<reference key="6">
    <citation type="journal article" date="1993" name="Curr. Genet.">
        <title>A multitude of suppressors of group II intron-splicing defects in yeast.</title>
        <authorList>
            <person name="Waldherr M."/>
            <person name="Ragnini A."/>
            <person name="Jank B."/>
            <person name="Teply R."/>
            <person name="Wiesenberger G."/>
            <person name="Schweyen R.J."/>
        </authorList>
    </citation>
    <scope>FUNCTION</scope>
</reference>
<reference key="7">
    <citation type="journal article" date="2003" name="Nature">
        <title>Global analysis of protein localization in budding yeast.</title>
        <authorList>
            <person name="Huh W.-K."/>
            <person name="Falvo J.V."/>
            <person name="Gerke L.C."/>
            <person name="Carroll A.S."/>
            <person name="Howson R.W."/>
            <person name="Weissman J.S."/>
            <person name="O'Shea E.K."/>
        </authorList>
    </citation>
    <scope>SUBCELLULAR LOCATION [LARGE SCALE ANALYSIS]</scope>
</reference>
<reference key="8">
    <citation type="journal article" date="2003" name="Nature">
        <title>Global analysis of protein expression in yeast.</title>
        <authorList>
            <person name="Ghaemmaghami S."/>
            <person name="Huh W.-K."/>
            <person name="Bower K."/>
            <person name="Howson R.W."/>
            <person name="Belle A."/>
            <person name="Dephoure N."/>
            <person name="O'Shea E.K."/>
            <person name="Weissman J.S."/>
        </authorList>
    </citation>
    <scope>LEVEL OF PROTEIN EXPRESSION [LARGE SCALE ANALYSIS]</scope>
</reference>
<reference key="9">
    <citation type="journal article" date="2007" name="J. Proteome Res.">
        <title>Large-scale phosphorylation analysis of alpha-factor-arrested Saccharomyces cerevisiae.</title>
        <authorList>
            <person name="Li X."/>
            <person name="Gerber S.A."/>
            <person name="Rudner A.D."/>
            <person name="Beausoleil S.A."/>
            <person name="Haas W."/>
            <person name="Villen J."/>
            <person name="Elias J.E."/>
            <person name="Gygi S.P."/>
        </authorList>
    </citation>
    <scope>PHOSPHORYLATION [LARGE SCALE ANALYSIS] AT SER-238 AND SER-340</scope>
    <scope>IDENTIFICATION BY MASS SPECTROMETRY [LARGE SCALE ANALYSIS]</scope>
    <source>
        <strain>ADR376</strain>
    </source>
</reference>
<reference key="10">
    <citation type="journal article" date="2007" name="Proc. Natl. Acad. Sci. U.S.A.">
        <title>Analysis of phosphorylation sites on proteins from Saccharomyces cerevisiae by electron transfer dissociation (ETD) mass spectrometry.</title>
        <authorList>
            <person name="Chi A."/>
            <person name="Huttenhower C."/>
            <person name="Geer L.Y."/>
            <person name="Coon J.J."/>
            <person name="Syka J.E.P."/>
            <person name="Bai D.L."/>
            <person name="Shabanowitz J."/>
            <person name="Burke D.J."/>
            <person name="Troyanskaya O.G."/>
            <person name="Hunt D.F."/>
        </authorList>
    </citation>
    <scope>PHOSPHORYLATION [LARGE SCALE ANALYSIS] AT SER-238</scope>
    <scope>IDENTIFICATION BY MASS SPECTROMETRY [LARGE SCALE ANALYSIS]</scope>
</reference>
<reference key="11">
    <citation type="journal article" date="2008" name="Mol. Cell. Proteomics">
        <title>A multidimensional chromatography technology for in-depth phosphoproteome analysis.</title>
        <authorList>
            <person name="Albuquerque C.P."/>
            <person name="Smolka M.B."/>
            <person name="Payne S.H."/>
            <person name="Bafna V."/>
            <person name="Eng J."/>
            <person name="Zhou H."/>
        </authorList>
    </citation>
    <scope>PHOSPHORYLATION [LARGE SCALE ANALYSIS] AT SER-340</scope>
    <scope>IDENTIFICATION BY MASS SPECTROMETRY [LARGE SCALE ANALYSIS]</scope>
</reference>
<reference key="12">
    <citation type="journal article" date="2009" name="Science">
        <title>Global analysis of Cdk1 substrate phosphorylation sites provides insights into evolution.</title>
        <authorList>
            <person name="Holt L.J."/>
            <person name="Tuch B.B."/>
            <person name="Villen J."/>
            <person name="Johnson A.D."/>
            <person name="Gygi S.P."/>
            <person name="Morgan D.O."/>
        </authorList>
    </citation>
    <scope>PHOSPHORYLATION [LARGE SCALE ANALYSIS] AT SER-238 AND SER-340</scope>
    <scope>IDENTIFICATION BY MASS SPECTROMETRY [LARGE SCALE ANALYSIS]</scope>
</reference>
<reference key="13">
    <citation type="journal article" date="2013" name="Nat. Struct. Mol. Biol.">
        <title>Global analysis of yeast mRNPs.</title>
        <authorList>
            <person name="Mitchell S.F."/>
            <person name="Jain S."/>
            <person name="She M."/>
            <person name="Parker R."/>
        </authorList>
    </citation>
    <scope>SUBCELLULAR LOCATION</scope>
</reference>
<reference key="14">
    <citation type="journal article" date="2015" name="Proteomics">
        <title>Expanding the yeast protein arginine methylome.</title>
        <authorList>
            <person name="Plank M."/>
            <person name="Fischer R."/>
            <person name="Geoghegan V."/>
            <person name="Charles P.D."/>
            <person name="Konietzny R."/>
            <person name="Acuto O."/>
            <person name="Pears C."/>
            <person name="Schofield C.J."/>
            <person name="Kessler B.M."/>
        </authorList>
    </citation>
    <scope>METHYLATION AT ARG-419; ARG-425; ARG-538; ARG-551 AND ARG-575</scope>
</reference>
<reference key="15">
    <citation type="journal article" date="2021" name="J. Proteome Res.">
        <title>Discovery of arginine methylation, phosphorylation, and their co-occurrence in condensate-associated proteins in Saccharomyces cerevisiae.</title>
        <authorList>
            <person name="Hamey J.J."/>
            <person name="Nguyen A."/>
            <person name="Wilkins M.R."/>
        </authorList>
    </citation>
    <scope>METHYLATION AT ARG-425; ARG-440; ARG-443 AND ARG-447</scope>
    <scope>PHOSPHORYLATION AT SER-150; SER-238; SER-340 AND SER-522</scope>
</reference>